<sequence length="240" mass="27612">MDEEVENKVILHGSFASPYSKRIELALRLKSIPYQFVQEDLQNKSQTLLRYNPVHKKIPVLVHNGKPISESLFIIEYIDETWSNGPHILPEDPYRRSKVRFWANYIQLHLYDLVIKVVKSEGEEQKKALTEVKEKLSVIEKEGLKEIFSDTDGEPTVTNETMSLVDIVMCTLLSPYKAHEEVLGLKIIDPEIVPGVYGWINAINETSVVKDLSPPYEQILEILRAFRQMSLSPVLETYQS</sequence>
<keyword id="KW-0025">Alternative splicing</keyword>
<keyword id="KW-0963">Cytoplasm</keyword>
<keyword id="KW-0216">Detoxification</keyword>
<keyword id="KW-0597">Phosphoprotein</keyword>
<keyword id="KW-1185">Reference proteome</keyword>
<keyword id="KW-0808">Transferase</keyword>
<name>GSTU9_ARATH</name>
<accession>Q9FUT0</accession>
<accession>Q9FE97</accession>
<organism>
    <name type="scientific">Arabidopsis thaliana</name>
    <name type="common">Mouse-ear cress</name>
    <dbReference type="NCBI Taxonomy" id="3702"/>
    <lineage>
        <taxon>Eukaryota</taxon>
        <taxon>Viridiplantae</taxon>
        <taxon>Streptophyta</taxon>
        <taxon>Embryophyta</taxon>
        <taxon>Tracheophyta</taxon>
        <taxon>Spermatophyta</taxon>
        <taxon>Magnoliopsida</taxon>
        <taxon>eudicotyledons</taxon>
        <taxon>Gunneridae</taxon>
        <taxon>Pentapetalae</taxon>
        <taxon>rosids</taxon>
        <taxon>malvids</taxon>
        <taxon>Brassicales</taxon>
        <taxon>Brassicaceae</taxon>
        <taxon>Camelineae</taxon>
        <taxon>Arabidopsis</taxon>
    </lineage>
</organism>
<reference key="1">
    <citation type="journal article" date="2002" name="Plant Mol. Biol.">
        <title>Probing the diversity of the Arabidopsis glutathione S-transferase gene family.</title>
        <authorList>
            <person name="Wagner U."/>
            <person name="Edwards R."/>
            <person name="Dixon D.P."/>
            <person name="Mauch F."/>
        </authorList>
    </citation>
    <scope>NUCLEOTIDE SEQUENCE [MRNA] (ISOFORMS 1 AND 2)</scope>
    <scope>GENE FAMILY</scope>
    <scope>NOMENCLATURE</scope>
    <source>
        <strain>cv. Columbia</strain>
    </source>
</reference>
<reference key="2">
    <citation type="journal article" date="1998" name="DNA Res.">
        <title>Structural analysis of Arabidopsis thaliana chromosome 5. VII. Sequence features of the regions of 1,013,767 bp covered by sixteen physically assigned P1 and TAC clones.</title>
        <authorList>
            <person name="Nakamura Y."/>
            <person name="Sato S."/>
            <person name="Asamizu E."/>
            <person name="Kaneko T."/>
            <person name="Kotani H."/>
            <person name="Miyajima N."/>
            <person name="Tabata S."/>
        </authorList>
    </citation>
    <scope>NUCLEOTIDE SEQUENCE [LARGE SCALE GENOMIC DNA]</scope>
    <source>
        <strain>cv. Columbia</strain>
    </source>
</reference>
<reference key="3">
    <citation type="journal article" date="2017" name="Plant J.">
        <title>Araport11: a complete reannotation of the Arabidopsis thaliana reference genome.</title>
        <authorList>
            <person name="Cheng C.Y."/>
            <person name="Krishnakumar V."/>
            <person name="Chan A.P."/>
            <person name="Thibaud-Nissen F."/>
            <person name="Schobel S."/>
            <person name="Town C.D."/>
        </authorList>
    </citation>
    <scope>GENOME REANNOTATION</scope>
    <source>
        <strain>cv. Columbia</strain>
    </source>
</reference>
<reference key="4">
    <citation type="submission" date="2004-09" db="EMBL/GenBank/DDBJ databases">
        <title>Large-scale analysis of RIKEN Arabidopsis full-length (RAFL) cDNAs.</title>
        <authorList>
            <person name="Totoki Y."/>
            <person name="Seki M."/>
            <person name="Ishida J."/>
            <person name="Nakajima M."/>
            <person name="Enju A."/>
            <person name="Kamiya A."/>
            <person name="Narusaka M."/>
            <person name="Shin-i T."/>
            <person name="Nakagawa M."/>
            <person name="Sakamoto N."/>
            <person name="Oishi K."/>
            <person name="Kohara Y."/>
            <person name="Kobayashi M."/>
            <person name="Toyoda A."/>
            <person name="Sakaki Y."/>
            <person name="Sakurai T."/>
            <person name="Iida K."/>
            <person name="Akiyama K."/>
            <person name="Satou M."/>
            <person name="Toyoda T."/>
            <person name="Konagaya A."/>
            <person name="Carninci P."/>
            <person name="Kawai J."/>
            <person name="Hayashizaki Y."/>
            <person name="Shinozaki K."/>
        </authorList>
    </citation>
    <scope>NUCLEOTIDE SEQUENCE [LARGE SCALE MRNA] (ISOFORM 1)</scope>
    <source>
        <strain>cv. Columbia</strain>
    </source>
</reference>
<gene>
    <name type="primary">GSTU9</name>
    <name type="synonym">GST14</name>
    <name type="synonym">GST14B</name>
    <name type="ordered locus">At5g62480</name>
    <name type="ORF">K19B1.9</name>
</gene>
<dbReference type="EC" id="2.5.1.18"/>
<dbReference type="EMBL" id="AF288179">
    <property type="protein sequence ID" value="AAG30128.1"/>
    <property type="molecule type" value="mRNA"/>
</dbReference>
<dbReference type="EMBL" id="AF288180">
    <property type="protein sequence ID" value="AAG30129.1"/>
    <property type="molecule type" value="mRNA"/>
</dbReference>
<dbReference type="EMBL" id="AB015469">
    <property type="protein sequence ID" value="BAB11498.1"/>
    <property type="molecule type" value="Genomic_DNA"/>
</dbReference>
<dbReference type="EMBL" id="CP002688">
    <property type="protein sequence ID" value="AED97612.1"/>
    <property type="molecule type" value="Genomic_DNA"/>
</dbReference>
<dbReference type="EMBL" id="CP002688">
    <property type="protein sequence ID" value="AED97613.1"/>
    <property type="molecule type" value="Genomic_DNA"/>
</dbReference>
<dbReference type="EMBL" id="AK176211">
    <property type="protein sequence ID" value="BAD43974.1"/>
    <property type="molecule type" value="mRNA"/>
</dbReference>
<dbReference type="RefSeq" id="NP_568954.2">
    <molecule id="Q9FUT0-2"/>
    <property type="nucleotide sequence ID" value="NM_125642.3"/>
</dbReference>
<dbReference type="RefSeq" id="NP_851249.1">
    <molecule id="Q9FUT0-1"/>
    <property type="nucleotide sequence ID" value="NM_180918.3"/>
</dbReference>
<dbReference type="SMR" id="Q9FUT0"/>
<dbReference type="FunCoup" id="Q9FUT0">
    <property type="interactions" value="132"/>
</dbReference>
<dbReference type="STRING" id="3702.Q9FUT0"/>
<dbReference type="PaxDb" id="3702-AT5G62480.1"/>
<dbReference type="ProteomicsDB" id="248496">
    <molecule id="Q9FUT0-1"/>
</dbReference>
<dbReference type="EnsemblPlants" id="AT5G62480.1">
    <molecule id="Q9FUT0-1"/>
    <property type="protein sequence ID" value="AT5G62480.1"/>
    <property type="gene ID" value="AT5G62480"/>
</dbReference>
<dbReference type="EnsemblPlants" id="AT5G62480.2">
    <molecule id="Q9FUT0-2"/>
    <property type="protein sequence ID" value="AT5G62480.2"/>
    <property type="gene ID" value="AT5G62480"/>
</dbReference>
<dbReference type="GeneID" id="836368"/>
<dbReference type="Gramene" id="AT5G62480.1">
    <molecule id="Q9FUT0-1"/>
    <property type="protein sequence ID" value="AT5G62480.1"/>
    <property type="gene ID" value="AT5G62480"/>
</dbReference>
<dbReference type="Gramene" id="AT5G62480.2">
    <molecule id="Q9FUT0-2"/>
    <property type="protein sequence ID" value="AT5G62480.2"/>
    <property type="gene ID" value="AT5G62480"/>
</dbReference>
<dbReference type="KEGG" id="ath:AT5G62480"/>
<dbReference type="Araport" id="AT5G62480"/>
<dbReference type="TAIR" id="AT5G62480">
    <property type="gene designation" value="GSTU9"/>
</dbReference>
<dbReference type="eggNOG" id="KOG0406">
    <property type="taxonomic scope" value="Eukaryota"/>
</dbReference>
<dbReference type="HOGENOM" id="CLU_011226_18_0_1"/>
<dbReference type="InParanoid" id="Q9FUT0"/>
<dbReference type="OMA" id="WASTYVK"/>
<dbReference type="PhylomeDB" id="Q9FUT0"/>
<dbReference type="BioCyc" id="ARA:AT5G62480-MONOMER"/>
<dbReference type="BRENDA" id="2.5.1.18">
    <property type="organism ID" value="399"/>
</dbReference>
<dbReference type="PRO" id="PR:Q9FUT0"/>
<dbReference type="Proteomes" id="UP000006548">
    <property type="component" value="Chromosome 5"/>
</dbReference>
<dbReference type="ExpressionAtlas" id="Q9FUT0">
    <property type="expression patterns" value="baseline and differential"/>
</dbReference>
<dbReference type="GO" id="GO:0005737">
    <property type="term" value="C:cytoplasm"/>
    <property type="evidence" value="ECO:0000303"/>
    <property type="project" value="TAIR"/>
</dbReference>
<dbReference type="GO" id="GO:0005829">
    <property type="term" value="C:cytosol"/>
    <property type="evidence" value="ECO:0007669"/>
    <property type="project" value="UniProtKB-SubCell"/>
</dbReference>
<dbReference type="GO" id="GO:0004364">
    <property type="term" value="F:glutathione transferase activity"/>
    <property type="evidence" value="ECO:0007669"/>
    <property type="project" value="UniProtKB-EC"/>
</dbReference>
<dbReference type="GO" id="GO:0006749">
    <property type="term" value="P:glutathione metabolic process"/>
    <property type="evidence" value="ECO:0007669"/>
    <property type="project" value="InterPro"/>
</dbReference>
<dbReference type="GO" id="GO:0009407">
    <property type="term" value="P:toxin catabolic process"/>
    <property type="evidence" value="ECO:0000304"/>
    <property type="project" value="TAIR"/>
</dbReference>
<dbReference type="CDD" id="cd03185">
    <property type="entry name" value="GST_C_Tau"/>
    <property type="match status" value="1"/>
</dbReference>
<dbReference type="CDD" id="cd03058">
    <property type="entry name" value="GST_N_Tau"/>
    <property type="match status" value="1"/>
</dbReference>
<dbReference type="FunFam" id="1.20.1050.10:FF:000016">
    <property type="entry name" value="Glutathione S-transferase U9"/>
    <property type="match status" value="1"/>
</dbReference>
<dbReference type="FunFam" id="3.40.30.10:FF:000014">
    <property type="entry name" value="Tau class glutathione S-transferase"/>
    <property type="match status" value="1"/>
</dbReference>
<dbReference type="Gene3D" id="1.20.1050.10">
    <property type="match status" value="1"/>
</dbReference>
<dbReference type="Gene3D" id="3.40.30.10">
    <property type="entry name" value="Glutaredoxin"/>
    <property type="match status" value="1"/>
</dbReference>
<dbReference type="InterPro" id="IPR010987">
    <property type="entry name" value="Glutathione-S-Trfase_C-like"/>
</dbReference>
<dbReference type="InterPro" id="IPR036282">
    <property type="entry name" value="Glutathione-S-Trfase_C_sf"/>
</dbReference>
<dbReference type="InterPro" id="IPR004045">
    <property type="entry name" value="Glutathione_S-Trfase_N"/>
</dbReference>
<dbReference type="InterPro" id="IPR045074">
    <property type="entry name" value="GST_C_Tau"/>
</dbReference>
<dbReference type="InterPro" id="IPR045073">
    <property type="entry name" value="Omega/Tau-like"/>
</dbReference>
<dbReference type="InterPro" id="IPR036249">
    <property type="entry name" value="Thioredoxin-like_sf"/>
</dbReference>
<dbReference type="PANTHER" id="PTHR11260:SF711">
    <property type="entry name" value="GLUTATHIONE S-TRANSFERASE U9"/>
    <property type="match status" value="1"/>
</dbReference>
<dbReference type="PANTHER" id="PTHR11260">
    <property type="entry name" value="GLUTATHIONE S-TRANSFERASE, GST, SUPERFAMILY, GST DOMAIN CONTAINING"/>
    <property type="match status" value="1"/>
</dbReference>
<dbReference type="Pfam" id="PF13417">
    <property type="entry name" value="GST_N_3"/>
    <property type="match status" value="1"/>
</dbReference>
<dbReference type="SFLD" id="SFLDG01152">
    <property type="entry name" value="Main.3:_Omega-_and_Tau-like"/>
    <property type="match status" value="1"/>
</dbReference>
<dbReference type="SFLD" id="SFLDG00358">
    <property type="entry name" value="Main_(cytGST)"/>
    <property type="match status" value="1"/>
</dbReference>
<dbReference type="SUPFAM" id="SSF47616">
    <property type="entry name" value="GST C-terminal domain-like"/>
    <property type="match status" value="1"/>
</dbReference>
<dbReference type="SUPFAM" id="SSF52833">
    <property type="entry name" value="Thioredoxin-like"/>
    <property type="match status" value="1"/>
</dbReference>
<dbReference type="PROSITE" id="PS50405">
    <property type="entry name" value="GST_CTER"/>
    <property type="match status" value="1"/>
</dbReference>
<dbReference type="PROSITE" id="PS50404">
    <property type="entry name" value="GST_NTER"/>
    <property type="match status" value="1"/>
</dbReference>
<protein>
    <recommendedName>
        <fullName>Glutathione S-transferase U9</fullName>
        <shortName>AtGSTU9</shortName>
        <ecNumber>2.5.1.18</ecNumber>
    </recommendedName>
    <alternativeName>
        <fullName>GST class-tau member 9</fullName>
    </alternativeName>
    <alternativeName>
        <fullName>Glutathione S-transferase 14</fullName>
    </alternativeName>
</protein>
<proteinExistence type="evidence at transcript level"/>
<comment type="function">
    <text evidence="1">May be involved in the conjugation of reduced glutathione to a wide number of exogenous and endogenous hydrophobic electrophiles and have a detoxification role against certain herbicides.</text>
</comment>
<comment type="catalytic activity">
    <reaction>
        <text>RX + glutathione = an S-substituted glutathione + a halide anion + H(+)</text>
        <dbReference type="Rhea" id="RHEA:16437"/>
        <dbReference type="ChEBI" id="CHEBI:15378"/>
        <dbReference type="ChEBI" id="CHEBI:16042"/>
        <dbReference type="ChEBI" id="CHEBI:17792"/>
        <dbReference type="ChEBI" id="CHEBI:57925"/>
        <dbReference type="ChEBI" id="CHEBI:90779"/>
        <dbReference type="EC" id="2.5.1.18"/>
    </reaction>
</comment>
<comment type="subcellular location">
    <subcellularLocation>
        <location evidence="4">Cytoplasm</location>
        <location evidence="4">Cytosol</location>
    </subcellularLocation>
</comment>
<comment type="alternative products">
    <event type="alternative splicing"/>
    <isoform>
        <id>Q9FUT0-1</id>
        <name>1</name>
        <sequence type="displayed"/>
    </isoform>
    <isoform>
        <id>Q9FUT0-2</id>
        <name>2</name>
        <sequence type="described" ref="VSP_041940"/>
    </isoform>
</comment>
<comment type="similarity">
    <text evidence="4">Belongs to the GST superfamily. Tau family.</text>
</comment>
<evidence type="ECO:0000250" key="1"/>
<evidence type="ECO:0000250" key="2">
    <source>
        <dbReference type="UniProtKB" id="Q9ZW27"/>
    </source>
</evidence>
<evidence type="ECO:0000303" key="3">
    <source>
    </source>
</evidence>
<evidence type="ECO:0000305" key="4"/>
<feature type="chain" id="PRO_0000413555" description="Glutathione S-transferase U9">
    <location>
        <begin position="1"/>
        <end position="240"/>
    </location>
</feature>
<feature type="domain" description="GST N-terminal">
    <location>
        <begin position="7"/>
        <end position="86"/>
    </location>
</feature>
<feature type="domain" description="GST C-terminal">
    <location>
        <begin position="92"/>
        <end position="226"/>
    </location>
</feature>
<feature type="binding site" evidence="1">
    <location>
        <begin position="17"/>
        <end position="18"/>
    </location>
    <ligand>
        <name>glutathione</name>
        <dbReference type="ChEBI" id="CHEBI:57925"/>
    </ligand>
</feature>
<feature type="binding site" evidence="1">
    <location>
        <begin position="43"/>
        <end position="44"/>
    </location>
    <ligand>
        <name>glutathione</name>
        <dbReference type="ChEBI" id="CHEBI:57925"/>
    </ligand>
</feature>
<feature type="binding site" evidence="1">
    <location>
        <begin position="57"/>
        <end position="58"/>
    </location>
    <ligand>
        <name>glutathione</name>
        <dbReference type="ChEBI" id="CHEBI:57925"/>
    </ligand>
</feature>
<feature type="binding site" evidence="1">
    <location>
        <begin position="70"/>
        <end position="71"/>
    </location>
    <ligand>
        <name>glutathione</name>
        <dbReference type="ChEBI" id="CHEBI:57925"/>
    </ligand>
</feature>
<feature type="modified residue" description="Phosphothreonine" evidence="2">
    <location>
        <position position="161"/>
    </location>
</feature>
<feature type="splice variant" id="VSP_041940" description="In isoform 2." evidence="3">
    <location>
        <begin position="65"/>
        <end position="90"/>
    </location>
</feature>